<feature type="chain" id="PRO_0000275533" description="Cytochrome b6-f complex subunit 6">
    <location>
        <begin position="1"/>
        <end position="31"/>
    </location>
</feature>
<feature type="transmembrane region" description="Helical" evidence="1">
    <location>
        <begin position="3"/>
        <end position="23"/>
    </location>
</feature>
<keyword id="KW-0150">Chloroplast</keyword>
<keyword id="KW-0249">Electron transport</keyword>
<keyword id="KW-0472">Membrane</keyword>
<keyword id="KW-0602">Photosynthesis</keyword>
<keyword id="KW-0934">Plastid</keyword>
<keyword id="KW-0793">Thylakoid</keyword>
<keyword id="KW-0812">Transmembrane</keyword>
<keyword id="KW-1133">Transmembrane helix</keyword>
<keyword id="KW-0813">Transport</keyword>
<geneLocation type="chloroplast"/>
<name>PETL_POPAL</name>
<proteinExistence type="inferred from homology"/>
<gene>
    <name evidence="1" type="primary">petL</name>
</gene>
<accession>Q14FD9</accession>
<organism>
    <name type="scientific">Populus alba</name>
    <name type="common">White poplar</name>
    <dbReference type="NCBI Taxonomy" id="43335"/>
    <lineage>
        <taxon>Eukaryota</taxon>
        <taxon>Viridiplantae</taxon>
        <taxon>Streptophyta</taxon>
        <taxon>Embryophyta</taxon>
        <taxon>Tracheophyta</taxon>
        <taxon>Spermatophyta</taxon>
        <taxon>Magnoliopsida</taxon>
        <taxon>eudicotyledons</taxon>
        <taxon>Gunneridae</taxon>
        <taxon>Pentapetalae</taxon>
        <taxon>rosids</taxon>
        <taxon>fabids</taxon>
        <taxon>Malpighiales</taxon>
        <taxon>Salicaceae</taxon>
        <taxon>Saliceae</taxon>
        <taxon>Populus</taxon>
    </lineage>
</organism>
<reference key="1">
    <citation type="submission" date="2005-03" db="EMBL/GenBank/DDBJ databases">
        <title>Complete structure of the chloroplast genome of Populus alba.</title>
        <authorList>
            <person name="Okumura S."/>
            <person name="Yamashita A."/>
            <person name="Kanamoto H."/>
            <person name="Hattori M."/>
            <person name="Takase H."/>
            <person name="Tomizawa K."/>
        </authorList>
    </citation>
    <scope>NUCLEOTIDE SEQUENCE [LARGE SCALE GENOMIC DNA]</scope>
</reference>
<protein>
    <recommendedName>
        <fullName evidence="1">Cytochrome b6-f complex subunit 6</fullName>
    </recommendedName>
    <alternativeName>
        <fullName evidence="1">Cytochrome b6-f complex subunit PetL</fullName>
    </alternativeName>
    <alternativeName>
        <fullName evidence="1">Cytochrome b6-f complex subunit VI</fullName>
    </alternativeName>
</protein>
<comment type="function">
    <text evidence="1">Component of the cytochrome b6-f complex, which mediates electron transfer between photosystem II (PSII) and photosystem I (PSI), cyclic electron flow around PSI, and state transitions. PetL is important for photoautotrophic growth as well as for electron transfer efficiency and stability of the cytochrome b6-f complex.</text>
</comment>
<comment type="subunit">
    <text evidence="1">The 4 large subunits of the cytochrome b6-f complex are cytochrome b6, subunit IV (17 kDa polypeptide, PetD), cytochrome f and the Rieske protein, while the 4 small subunits are PetG, PetL, PetM and PetN. The complex functions as a dimer.</text>
</comment>
<comment type="subcellular location">
    <subcellularLocation>
        <location evidence="1">Plastid</location>
        <location evidence="1">Chloroplast thylakoid membrane</location>
        <topology evidence="1">Single-pass membrane protein</topology>
    </subcellularLocation>
</comment>
<comment type="similarity">
    <text evidence="1">Belongs to the PetL family.</text>
</comment>
<dbReference type="EMBL" id="AP008956">
    <property type="protein sequence ID" value="BAE97223.1"/>
    <property type="molecule type" value="Genomic_DNA"/>
</dbReference>
<dbReference type="RefSeq" id="YP_665576.1">
    <property type="nucleotide sequence ID" value="NC_008235.1"/>
</dbReference>
<dbReference type="SMR" id="Q14FD9"/>
<dbReference type="GeneID" id="4178206"/>
<dbReference type="KEGG" id="palz:4178206"/>
<dbReference type="OrthoDB" id="22345at3646"/>
<dbReference type="GO" id="GO:0009535">
    <property type="term" value="C:chloroplast thylakoid membrane"/>
    <property type="evidence" value="ECO:0007669"/>
    <property type="project" value="UniProtKB-SubCell"/>
</dbReference>
<dbReference type="GO" id="GO:0009512">
    <property type="term" value="C:cytochrome b6f complex"/>
    <property type="evidence" value="ECO:0007669"/>
    <property type="project" value="InterPro"/>
</dbReference>
<dbReference type="GO" id="GO:0045158">
    <property type="term" value="F:electron transporter, transferring electrons within cytochrome b6/f complex of photosystem II activity"/>
    <property type="evidence" value="ECO:0007669"/>
    <property type="project" value="UniProtKB-UniRule"/>
</dbReference>
<dbReference type="GO" id="GO:0015979">
    <property type="term" value="P:photosynthesis"/>
    <property type="evidence" value="ECO:0007669"/>
    <property type="project" value="UniProtKB-KW"/>
</dbReference>
<dbReference type="HAMAP" id="MF_00433">
    <property type="entry name" value="Cytb6_f_PetL"/>
    <property type="match status" value="1"/>
</dbReference>
<dbReference type="InterPro" id="IPR007802">
    <property type="entry name" value="Cyt_b6/f_cplx_su6"/>
</dbReference>
<dbReference type="PANTHER" id="PTHR37266">
    <property type="entry name" value="CYTOCHROME B6-F COMPLEX SUBUNIT 6"/>
    <property type="match status" value="1"/>
</dbReference>
<dbReference type="PANTHER" id="PTHR37266:SF1">
    <property type="entry name" value="CYTOCHROME B6-F COMPLEX SUBUNIT 6"/>
    <property type="match status" value="1"/>
</dbReference>
<dbReference type="Pfam" id="PF05115">
    <property type="entry name" value="PetL"/>
    <property type="match status" value="1"/>
</dbReference>
<evidence type="ECO:0000255" key="1">
    <source>
        <dbReference type="HAMAP-Rule" id="MF_00433"/>
    </source>
</evidence>
<sequence length="31" mass="3485">MPTLTSYFGFLLVALTITLVLFISLSKIRLI</sequence>